<keyword id="KW-0249">Electron transport</keyword>
<keyword id="KW-0349">Heme</keyword>
<keyword id="KW-0408">Iron</keyword>
<keyword id="KW-0472">Membrane</keyword>
<keyword id="KW-0479">Metal-binding</keyword>
<keyword id="KW-0496">Mitochondrion</keyword>
<keyword id="KW-0999">Mitochondrion inner membrane</keyword>
<keyword id="KW-0679">Respiratory chain</keyword>
<keyword id="KW-0812">Transmembrane</keyword>
<keyword id="KW-1133">Transmembrane helix</keyword>
<keyword id="KW-0813">Transport</keyword>
<keyword id="KW-0830">Ubiquinone</keyword>
<organism>
    <name type="scientific">Geothlypis aequinoctialis</name>
    <name type="common">Masked yellowthroat</name>
    <dbReference type="NCBI Taxonomy" id="158054"/>
    <lineage>
        <taxon>Eukaryota</taxon>
        <taxon>Metazoa</taxon>
        <taxon>Chordata</taxon>
        <taxon>Craniata</taxon>
        <taxon>Vertebrata</taxon>
        <taxon>Euteleostomi</taxon>
        <taxon>Archelosauria</taxon>
        <taxon>Archosauria</taxon>
        <taxon>Dinosauria</taxon>
        <taxon>Saurischia</taxon>
        <taxon>Theropoda</taxon>
        <taxon>Coelurosauria</taxon>
        <taxon>Aves</taxon>
        <taxon>Neognathae</taxon>
        <taxon>Neoaves</taxon>
        <taxon>Telluraves</taxon>
        <taxon>Australaves</taxon>
        <taxon>Passeriformes</taxon>
        <taxon>Passeroidea</taxon>
        <taxon>Parulidae</taxon>
        <taxon>Geothlypis</taxon>
    </lineage>
</organism>
<name>CYB_GEOAE</name>
<sequence>MALNLRKNHQILKIINDALIDLPTPSNISTWWNFGSLLGICLITQIVTGLLLAMHYTADTNLAFSSVAHMCRDVQFGWLIRNLHANGASFFFICIYLHIGRGLYYGSYLNKETWNIGVILLLTLMATAFVGYVLPWGQXSFWGATVITNLFSAIPYIGQTLVEWAWGGFSVDNPTLTRFFALHFLLPFVIVGLTLVHLTFLHETGSNNPLGIPSDCDKIPFHPYYTIKDILGFVLMLSLLVSLALFAPNLLGDPENFTPANPLVTPPHIKPEWYFLFAYAILRSIPNKLGGVLALAASILVLFLTPLLHTSKLRSMTFRPLSQILFWTLVANVLILTWVGSQPVEHPFIIIGQLASFTYFTIILILFPLAAALENKLLKL</sequence>
<geneLocation type="mitochondrion"/>
<evidence type="ECO:0000250" key="1"/>
<evidence type="ECO:0000250" key="2">
    <source>
        <dbReference type="UniProtKB" id="P00157"/>
    </source>
</evidence>
<evidence type="ECO:0000255" key="3">
    <source>
        <dbReference type="PROSITE-ProRule" id="PRU00967"/>
    </source>
</evidence>
<evidence type="ECO:0000255" key="4">
    <source>
        <dbReference type="PROSITE-ProRule" id="PRU00968"/>
    </source>
</evidence>
<reference key="1">
    <citation type="journal article" date="2001" name="Mol. Phylogenet. Evol.">
        <title>Higher-level phylogeny of New World vireos (Aves: Vireonidae) based on sequences of multiple mitochondrial DNA genes.</title>
        <authorList>
            <person name="Cicero C."/>
            <person name="Johnson N.K."/>
        </authorList>
    </citation>
    <scope>NUCLEOTIDE SEQUENCE [GENOMIC DNA]</scope>
    <source>
        <strain>Isolate MVZ 168913</strain>
    </source>
</reference>
<proteinExistence type="inferred from homology"/>
<comment type="function">
    <text evidence="2">Component of the ubiquinol-cytochrome c reductase complex (complex III or cytochrome b-c1 complex) that is part of the mitochondrial respiratory chain. The b-c1 complex mediates electron transfer from ubiquinol to cytochrome c. Contributes to the generation of a proton gradient across the mitochondrial membrane that is then used for ATP synthesis.</text>
</comment>
<comment type="cofactor">
    <cofactor evidence="2">
        <name>heme b</name>
        <dbReference type="ChEBI" id="CHEBI:60344"/>
    </cofactor>
    <text evidence="2">Binds 2 heme b groups non-covalently.</text>
</comment>
<comment type="subunit">
    <text evidence="2">The cytochrome bc1 complex contains 11 subunits: 3 respiratory subunits (MT-CYB, CYC1 and UQCRFS1), 2 core proteins (UQCRC1 and UQCRC2) and 6 low-molecular weight proteins (UQCRH/QCR6, UQCRB/QCR7, UQCRQ/QCR8, UQCR10/QCR9, UQCR11/QCR10 and a cleavage product of UQCRFS1). This cytochrome bc1 complex then forms a dimer.</text>
</comment>
<comment type="subcellular location">
    <subcellularLocation>
        <location evidence="2">Mitochondrion inner membrane</location>
        <topology evidence="2">Multi-pass membrane protein</topology>
    </subcellularLocation>
</comment>
<comment type="miscellaneous">
    <text evidence="1">Heme 1 (or BL or b562) is low-potential and absorbs at about 562 nm, and heme 2 (or BH or b566) is high-potential and absorbs at about 566 nm.</text>
</comment>
<comment type="similarity">
    <text evidence="3 4">Belongs to the cytochrome b family.</text>
</comment>
<comment type="caution">
    <text evidence="2">The full-length protein contains only eight transmembrane helices, not nine as predicted by bioinformatics tools.</text>
</comment>
<gene>
    <name type="primary">MT-CYB</name>
    <name type="synonym">COB</name>
    <name type="synonym">CYTB</name>
    <name type="synonym">MTCYB</name>
</gene>
<dbReference type="EMBL" id="AY030121">
    <property type="protein sequence ID" value="AAK50164.1"/>
    <property type="molecule type" value="Genomic_DNA"/>
</dbReference>
<dbReference type="GO" id="GO:0005743">
    <property type="term" value="C:mitochondrial inner membrane"/>
    <property type="evidence" value="ECO:0007669"/>
    <property type="project" value="UniProtKB-SubCell"/>
</dbReference>
<dbReference type="GO" id="GO:0045275">
    <property type="term" value="C:respiratory chain complex III"/>
    <property type="evidence" value="ECO:0007669"/>
    <property type="project" value="InterPro"/>
</dbReference>
<dbReference type="GO" id="GO:0046872">
    <property type="term" value="F:metal ion binding"/>
    <property type="evidence" value="ECO:0007669"/>
    <property type="project" value="UniProtKB-KW"/>
</dbReference>
<dbReference type="GO" id="GO:0008121">
    <property type="term" value="F:ubiquinol-cytochrome-c reductase activity"/>
    <property type="evidence" value="ECO:0007669"/>
    <property type="project" value="InterPro"/>
</dbReference>
<dbReference type="GO" id="GO:0006122">
    <property type="term" value="P:mitochondrial electron transport, ubiquinol to cytochrome c"/>
    <property type="evidence" value="ECO:0007669"/>
    <property type="project" value="TreeGrafter"/>
</dbReference>
<dbReference type="CDD" id="cd00290">
    <property type="entry name" value="cytochrome_b_C"/>
    <property type="match status" value="1"/>
</dbReference>
<dbReference type="CDD" id="cd00284">
    <property type="entry name" value="Cytochrome_b_N"/>
    <property type="match status" value="1"/>
</dbReference>
<dbReference type="FunFam" id="1.20.810.10:FF:000002">
    <property type="entry name" value="Cytochrome b"/>
    <property type="match status" value="1"/>
</dbReference>
<dbReference type="Gene3D" id="1.20.810.10">
    <property type="entry name" value="Cytochrome Bc1 Complex, Chain C"/>
    <property type="match status" value="1"/>
</dbReference>
<dbReference type="InterPro" id="IPR005798">
    <property type="entry name" value="Cyt_b/b6_C"/>
</dbReference>
<dbReference type="InterPro" id="IPR036150">
    <property type="entry name" value="Cyt_b/b6_C_sf"/>
</dbReference>
<dbReference type="InterPro" id="IPR005797">
    <property type="entry name" value="Cyt_b/b6_N"/>
</dbReference>
<dbReference type="InterPro" id="IPR027387">
    <property type="entry name" value="Cytb/b6-like_sf"/>
</dbReference>
<dbReference type="InterPro" id="IPR030689">
    <property type="entry name" value="Cytochrome_b"/>
</dbReference>
<dbReference type="InterPro" id="IPR048260">
    <property type="entry name" value="Cytochrome_b_C_euk/bac"/>
</dbReference>
<dbReference type="InterPro" id="IPR048259">
    <property type="entry name" value="Cytochrome_b_N_euk/bac"/>
</dbReference>
<dbReference type="InterPro" id="IPR016174">
    <property type="entry name" value="Di-haem_cyt_TM"/>
</dbReference>
<dbReference type="PANTHER" id="PTHR19271">
    <property type="entry name" value="CYTOCHROME B"/>
    <property type="match status" value="1"/>
</dbReference>
<dbReference type="PANTHER" id="PTHR19271:SF16">
    <property type="entry name" value="CYTOCHROME B"/>
    <property type="match status" value="1"/>
</dbReference>
<dbReference type="Pfam" id="PF00032">
    <property type="entry name" value="Cytochrom_B_C"/>
    <property type="match status" value="1"/>
</dbReference>
<dbReference type="Pfam" id="PF00033">
    <property type="entry name" value="Cytochrome_B"/>
    <property type="match status" value="1"/>
</dbReference>
<dbReference type="PIRSF" id="PIRSF038885">
    <property type="entry name" value="COB"/>
    <property type="match status" value="1"/>
</dbReference>
<dbReference type="SUPFAM" id="SSF81648">
    <property type="entry name" value="a domain/subunit of cytochrome bc1 complex (Ubiquinol-cytochrome c reductase)"/>
    <property type="match status" value="1"/>
</dbReference>
<dbReference type="SUPFAM" id="SSF81342">
    <property type="entry name" value="Transmembrane di-heme cytochromes"/>
    <property type="match status" value="1"/>
</dbReference>
<dbReference type="PROSITE" id="PS51003">
    <property type="entry name" value="CYTB_CTER"/>
    <property type="match status" value="1"/>
</dbReference>
<dbReference type="PROSITE" id="PS51002">
    <property type="entry name" value="CYTB_NTER"/>
    <property type="match status" value="1"/>
</dbReference>
<accession>Q950B9</accession>
<feature type="chain" id="PRO_0000060997" description="Cytochrome b">
    <location>
        <begin position="1"/>
        <end position="380"/>
    </location>
</feature>
<feature type="transmembrane region" description="Helical" evidence="2">
    <location>
        <begin position="34"/>
        <end position="54"/>
    </location>
</feature>
<feature type="transmembrane region" description="Helical" evidence="2">
    <location>
        <begin position="78"/>
        <end position="99"/>
    </location>
</feature>
<feature type="transmembrane region" description="Helical" evidence="2">
    <location>
        <begin position="114"/>
        <end position="134"/>
    </location>
</feature>
<feature type="transmembrane region" description="Helical" evidence="2">
    <location>
        <begin position="179"/>
        <end position="199"/>
    </location>
</feature>
<feature type="transmembrane region" description="Helical" evidence="2">
    <location>
        <begin position="227"/>
        <end position="247"/>
    </location>
</feature>
<feature type="transmembrane region" description="Helical" evidence="2">
    <location>
        <begin position="289"/>
        <end position="309"/>
    </location>
</feature>
<feature type="transmembrane region" description="Helical" evidence="2">
    <location>
        <begin position="321"/>
        <end position="341"/>
    </location>
</feature>
<feature type="transmembrane region" description="Helical" evidence="2">
    <location>
        <begin position="348"/>
        <end position="368"/>
    </location>
</feature>
<feature type="binding site" description="axial binding residue" evidence="2">
    <location>
        <position position="84"/>
    </location>
    <ligand>
        <name>heme b</name>
        <dbReference type="ChEBI" id="CHEBI:60344"/>
        <label>b562</label>
    </ligand>
    <ligandPart>
        <name>Fe</name>
        <dbReference type="ChEBI" id="CHEBI:18248"/>
    </ligandPart>
</feature>
<feature type="binding site" description="axial binding residue" evidence="2">
    <location>
        <position position="98"/>
    </location>
    <ligand>
        <name>heme b</name>
        <dbReference type="ChEBI" id="CHEBI:60344"/>
        <label>b566</label>
    </ligand>
    <ligandPart>
        <name>Fe</name>
        <dbReference type="ChEBI" id="CHEBI:18248"/>
    </ligandPart>
</feature>
<feature type="binding site" description="axial binding residue" evidence="2">
    <location>
        <position position="183"/>
    </location>
    <ligand>
        <name>heme b</name>
        <dbReference type="ChEBI" id="CHEBI:60344"/>
        <label>b562</label>
    </ligand>
    <ligandPart>
        <name>Fe</name>
        <dbReference type="ChEBI" id="CHEBI:18248"/>
    </ligandPart>
</feature>
<feature type="binding site" description="axial binding residue" evidence="2">
    <location>
        <position position="197"/>
    </location>
    <ligand>
        <name>heme b</name>
        <dbReference type="ChEBI" id="CHEBI:60344"/>
        <label>b566</label>
    </ligand>
    <ligandPart>
        <name>Fe</name>
        <dbReference type="ChEBI" id="CHEBI:18248"/>
    </ligandPart>
</feature>
<feature type="binding site" evidence="2">
    <location>
        <position position="202"/>
    </location>
    <ligand>
        <name>a ubiquinone</name>
        <dbReference type="ChEBI" id="CHEBI:16389"/>
    </ligand>
</feature>
<protein>
    <recommendedName>
        <fullName>Cytochrome b</fullName>
    </recommendedName>
    <alternativeName>
        <fullName>Complex III subunit 3</fullName>
    </alternativeName>
    <alternativeName>
        <fullName>Complex III subunit III</fullName>
    </alternativeName>
    <alternativeName>
        <fullName>Cytochrome b-c1 complex subunit 3</fullName>
    </alternativeName>
    <alternativeName>
        <fullName>Ubiquinol-cytochrome-c reductase complex cytochrome b subunit</fullName>
    </alternativeName>
</protein>